<name>PCP16_ARATH</name>
<organism>
    <name type="scientific">Arabidopsis thaliana</name>
    <name type="common">Mouse-ear cress</name>
    <dbReference type="NCBI Taxonomy" id="3702"/>
    <lineage>
        <taxon>Eukaryota</taxon>
        <taxon>Viridiplantae</taxon>
        <taxon>Streptophyta</taxon>
        <taxon>Embryophyta</taxon>
        <taxon>Tracheophyta</taxon>
        <taxon>Spermatophyta</taxon>
        <taxon>Magnoliopsida</taxon>
        <taxon>eudicotyledons</taxon>
        <taxon>Gunneridae</taxon>
        <taxon>Pentapetalae</taxon>
        <taxon>rosids</taxon>
        <taxon>malvids</taxon>
        <taxon>Brassicales</taxon>
        <taxon>Brassicaceae</taxon>
        <taxon>Camelineae</taxon>
        <taxon>Arabidopsis</taxon>
    </lineage>
</organism>
<feature type="signal peptide" evidence="4">
    <location>
        <begin position="1"/>
        <end position="27"/>
    </location>
</feature>
<feature type="propeptide" id="PRO_0000440016" evidence="7">
    <location>
        <begin position="28"/>
        <end position="92"/>
    </location>
</feature>
<feature type="peptide" id="PRO_0000440017" description="C-terminally encoded peptide 16" evidence="2">
    <location>
        <begin position="93"/>
        <end position="108"/>
    </location>
</feature>
<feature type="region of interest" description="Disordered" evidence="6">
    <location>
        <begin position="76"/>
        <end position="108"/>
    </location>
</feature>
<feature type="modified residue" description="Hydroxyproline" evidence="2">
    <location>
        <position position="102"/>
    </location>
</feature>
<feature type="modified residue" description="Hydroxyproline" evidence="3">
    <location>
        <position position="104"/>
    </location>
</feature>
<feature type="glycosylation site" description="N-linked (GlcNAc...) asparagine" evidence="5">
    <location>
        <position position="50"/>
    </location>
</feature>
<feature type="glycosylation site" description="N-linked (GlcNAc...) asparagine" evidence="5">
    <location>
        <position position="98"/>
    </location>
</feature>
<comment type="function">
    <text evidence="3">Extracellular signaling peptide that may regulate primary root growth rate and systemic nitrogen (N)-demand signaling.</text>
</comment>
<comment type="subunit">
    <text evidence="3">Interacts with CEP receptors (e.g. CEPR1 and CEPR2).</text>
</comment>
<comment type="subcellular location">
    <molecule>C-terminally encoded peptide 16</molecule>
    <subcellularLocation>
        <location evidence="1">Secreted</location>
        <location evidence="1">Extracellular space</location>
        <location evidence="1">Apoplast</location>
    </subcellularLocation>
    <text evidence="1">Accumulates in xylem sap.</text>
</comment>
<comment type="PTM">
    <text evidence="3">The mature small signaling peptide is generated by proteolytic processing of the longer precursor.</text>
</comment>
<comment type="similarity">
    <text evidence="7">Belongs to the C-terminally encoded plant signaling peptide (CEP) family.</text>
</comment>
<comment type="sequence caution" evidence="7">
    <conflict type="erroneous gene model prediction">
        <sequence resource="EMBL-CDS" id="AAG51771"/>
    </conflict>
</comment>
<dbReference type="EMBL" id="AC079674">
    <property type="protein sequence ID" value="AAG51771.1"/>
    <property type="status" value="ALT_SEQ"/>
    <property type="molecule type" value="Genomic_DNA"/>
</dbReference>
<dbReference type="EMBL" id="CP002684">
    <property type="protein sequence ID" value="AEE32478.1"/>
    <property type="molecule type" value="Genomic_DNA"/>
</dbReference>
<dbReference type="EMBL" id="AY735532">
    <property type="protein sequence ID" value="AAU44402.1"/>
    <property type="molecule type" value="mRNA"/>
</dbReference>
<dbReference type="EMBL" id="AY773823">
    <property type="protein sequence ID" value="AAV63852.1"/>
    <property type="molecule type" value="Genomic_DNA"/>
</dbReference>
<dbReference type="PIR" id="G96534">
    <property type="entry name" value="G96534"/>
</dbReference>
<dbReference type="RefSeq" id="NP_175402.2">
    <property type="nucleotide sequence ID" value="NM_103867.3"/>
</dbReference>
<dbReference type="SMR" id="Q5S502"/>
<dbReference type="STRING" id="3702.Q5S502"/>
<dbReference type="GlyCosmos" id="Q5S502">
    <property type="glycosylation" value="2 sites, No reported glycans"/>
</dbReference>
<dbReference type="GlyGen" id="Q5S502">
    <property type="glycosylation" value="2 sites"/>
</dbReference>
<dbReference type="PaxDb" id="3702-AT1G49800.1"/>
<dbReference type="EnsemblPlants" id="AT1G49800.1">
    <property type="protein sequence ID" value="AT1G49800.1"/>
    <property type="gene ID" value="AT1G49800"/>
</dbReference>
<dbReference type="GeneID" id="841403"/>
<dbReference type="Gramene" id="AT1G49800.1">
    <property type="protein sequence ID" value="AT1G49800.1"/>
    <property type="gene ID" value="AT1G49800"/>
</dbReference>
<dbReference type="KEGG" id="ath:AT1G49800"/>
<dbReference type="Araport" id="AT1G49800"/>
<dbReference type="TAIR" id="AT1G49800">
    <property type="gene designation" value="PREPIPL1"/>
</dbReference>
<dbReference type="eggNOG" id="ENOG502R1TS">
    <property type="taxonomic scope" value="Eukaryota"/>
</dbReference>
<dbReference type="HOGENOM" id="CLU_2284599_0_0_1"/>
<dbReference type="InParanoid" id="Q5S502"/>
<dbReference type="OMA" id="MFGRAND"/>
<dbReference type="PhylomeDB" id="Q5S502"/>
<dbReference type="PRO" id="PR:Q5S502"/>
<dbReference type="Proteomes" id="UP000006548">
    <property type="component" value="Chromosome 1"/>
</dbReference>
<dbReference type="ExpressionAtlas" id="Q5S502">
    <property type="expression patterns" value="baseline and differential"/>
</dbReference>
<dbReference type="GO" id="GO:0048046">
    <property type="term" value="C:apoplast"/>
    <property type="evidence" value="ECO:0000250"/>
    <property type="project" value="UniProtKB"/>
</dbReference>
<dbReference type="GO" id="GO:0005179">
    <property type="term" value="F:hormone activity"/>
    <property type="evidence" value="ECO:0000250"/>
    <property type="project" value="UniProtKB"/>
</dbReference>
<dbReference type="GO" id="GO:0045087">
    <property type="term" value="P:innate immune response"/>
    <property type="evidence" value="ECO:0007669"/>
    <property type="project" value="InterPro"/>
</dbReference>
<dbReference type="GO" id="GO:1902025">
    <property type="term" value="P:nitrate import"/>
    <property type="evidence" value="ECO:0000250"/>
    <property type="project" value="UniProtKB"/>
</dbReference>
<dbReference type="GO" id="GO:2000280">
    <property type="term" value="P:regulation of root development"/>
    <property type="evidence" value="ECO:0000250"/>
    <property type="project" value="UniProtKB"/>
</dbReference>
<dbReference type="InterPro" id="IPR044700">
    <property type="entry name" value="PIP2/PIPL1"/>
</dbReference>
<dbReference type="PANTHER" id="PTHR34663">
    <property type="entry name" value="OS06G0637400 PROTEIN"/>
    <property type="match status" value="1"/>
</dbReference>
<dbReference type="PANTHER" id="PTHR34663:SF13">
    <property type="entry name" value="PRECURSOR OF CEP16"/>
    <property type="match status" value="1"/>
</dbReference>
<protein>
    <recommendedName>
        <fullName evidence="7">Precursor of CEP16</fullName>
        <shortName evidence="7">PCEP16</shortName>
    </recommendedName>
    <component>
        <recommendedName>
            <fullName evidence="7">C-terminally encoded peptide 16</fullName>
            <shortName evidence="7">CEP16</shortName>
        </recommendedName>
    </component>
</protein>
<evidence type="ECO:0000250" key="1">
    <source>
        <dbReference type="UniProtKB" id="O80460"/>
    </source>
</evidence>
<evidence type="ECO:0000250" key="2">
    <source>
        <dbReference type="UniProtKB" id="Q058G9"/>
    </source>
</evidence>
<evidence type="ECO:0000250" key="3">
    <source>
        <dbReference type="UniProtKB" id="Q8L8Y3"/>
    </source>
</evidence>
<evidence type="ECO:0000255" key="4"/>
<evidence type="ECO:0000255" key="5">
    <source>
        <dbReference type="PROSITE-ProRule" id="PRU00498"/>
    </source>
</evidence>
<evidence type="ECO:0000256" key="6">
    <source>
        <dbReference type="SAM" id="MobiDB-lite"/>
    </source>
</evidence>
<evidence type="ECO:0000305" key="7"/>
<evidence type="ECO:0000312" key="8">
    <source>
        <dbReference type="Araport" id="AT1G49800"/>
    </source>
</evidence>
<evidence type="ECO:0000312" key="9">
    <source>
        <dbReference type="EMBL" id="AAG51771.1"/>
    </source>
</evidence>
<proteinExistence type="inferred from homology"/>
<gene>
    <name evidence="7" type="primary">CEP16</name>
    <name evidence="8" type="ordered locus">At1g49800</name>
    <name evidence="9" type="ORF">F10F5.5</name>
</gene>
<keyword id="KW-0052">Apoplast</keyword>
<keyword id="KW-0217">Developmental protein</keyword>
<keyword id="KW-0325">Glycoprotein</keyword>
<keyword id="KW-0372">Hormone</keyword>
<keyword id="KW-0379">Hydroxylation</keyword>
<keyword id="KW-1185">Reference proteome</keyword>
<keyword id="KW-0964">Secreted</keyword>
<keyword id="KW-0732">Signal</keyword>
<reference key="1">
    <citation type="journal article" date="2000" name="Nature">
        <title>Sequence and analysis of chromosome 1 of the plant Arabidopsis thaliana.</title>
        <authorList>
            <person name="Theologis A."/>
            <person name="Ecker J.R."/>
            <person name="Palm C.J."/>
            <person name="Federspiel N.A."/>
            <person name="Kaul S."/>
            <person name="White O."/>
            <person name="Alonso J."/>
            <person name="Altafi H."/>
            <person name="Araujo R."/>
            <person name="Bowman C.L."/>
            <person name="Brooks S.Y."/>
            <person name="Buehler E."/>
            <person name="Chan A."/>
            <person name="Chao Q."/>
            <person name="Chen H."/>
            <person name="Cheuk R.F."/>
            <person name="Chin C.W."/>
            <person name="Chung M.K."/>
            <person name="Conn L."/>
            <person name="Conway A.B."/>
            <person name="Conway A.R."/>
            <person name="Creasy T.H."/>
            <person name="Dewar K."/>
            <person name="Dunn P."/>
            <person name="Etgu P."/>
            <person name="Feldblyum T.V."/>
            <person name="Feng J.-D."/>
            <person name="Fong B."/>
            <person name="Fujii C.Y."/>
            <person name="Gill J.E."/>
            <person name="Goldsmith A.D."/>
            <person name="Haas B."/>
            <person name="Hansen N.F."/>
            <person name="Hughes B."/>
            <person name="Huizar L."/>
            <person name="Hunter J.L."/>
            <person name="Jenkins J."/>
            <person name="Johnson-Hopson C."/>
            <person name="Khan S."/>
            <person name="Khaykin E."/>
            <person name="Kim C.J."/>
            <person name="Koo H.L."/>
            <person name="Kremenetskaia I."/>
            <person name="Kurtz D.B."/>
            <person name="Kwan A."/>
            <person name="Lam B."/>
            <person name="Langin-Hooper S."/>
            <person name="Lee A."/>
            <person name="Lee J.M."/>
            <person name="Lenz C.A."/>
            <person name="Li J.H."/>
            <person name="Li Y.-P."/>
            <person name="Lin X."/>
            <person name="Liu S.X."/>
            <person name="Liu Z.A."/>
            <person name="Luros J.S."/>
            <person name="Maiti R."/>
            <person name="Marziali A."/>
            <person name="Militscher J."/>
            <person name="Miranda M."/>
            <person name="Nguyen M."/>
            <person name="Nierman W.C."/>
            <person name="Osborne B.I."/>
            <person name="Pai G."/>
            <person name="Peterson J."/>
            <person name="Pham P.K."/>
            <person name="Rizzo M."/>
            <person name="Rooney T."/>
            <person name="Rowley D."/>
            <person name="Sakano H."/>
            <person name="Salzberg S.L."/>
            <person name="Schwartz J.R."/>
            <person name="Shinn P."/>
            <person name="Southwick A.M."/>
            <person name="Sun H."/>
            <person name="Tallon L.J."/>
            <person name="Tambunga G."/>
            <person name="Toriumi M.J."/>
            <person name="Town C.D."/>
            <person name="Utterback T."/>
            <person name="Van Aken S."/>
            <person name="Vaysberg M."/>
            <person name="Vysotskaia V.S."/>
            <person name="Walker M."/>
            <person name="Wu D."/>
            <person name="Yu G."/>
            <person name="Fraser C.M."/>
            <person name="Venter J.C."/>
            <person name="Davis R.W."/>
        </authorList>
    </citation>
    <scope>NUCLEOTIDE SEQUENCE [LARGE SCALE GENOMIC DNA]</scope>
    <source>
        <strain>cv. Columbia</strain>
    </source>
</reference>
<reference key="2">
    <citation type="journal article" date="2017" name="Plant J.">
        <title>Araport11: a complete reannotation of the Arabidopsis thaliana reference genome.</title>
        <authorList>
            <person name="Cheng C.Y."/>
            <person name="Krishnakumar V."/>
            <person name="Chan A.P."/>
            <person name="Thibaud-Nissen F."/>
            <person name="Schobel S."/>
            <person name="Town C.D."/>
        </authorList>
    </citation>
    <scope>GENOME REANNOTATION</scope>
    <source>
        <strain>cv. Columbia</strain>
    </source>
</reference>
<reference key="3">
    <citation type="submission" date="2004-10" db="EMBL/GenBank/DDBJ databases">
        <authorList>
            <person name="Underwood B.A."/>
            <person name="Xiao Y.-L."/>
            <person name="Moskal W.A. Jr."/>
            <person name="Monaghan E.L."/>
            <person name="Wang W."/>
            <person name="Redman J.C."/>
            <person name="Wu H.C."/>
            <person name="Utterback T."/>
            <person name="Town C.D."/>
        </authorList>
    </citation>
    <scope>NUCLEOTIDE SEQUENCE [LARGE SCALE GENOMIC DNA / MRNA]</scope>
    <source>
        <strain>cv. Columbia</strain>
    </source>
</reference>
<reference key="4">
    <citation type="journal article" date="2005" name="Plant Physiol.">
        <title>Analysis of the cDNAs of hypothetical genes on Arabidopsis chromosome 2 reveals numerous transcript variants.</title>
        <authorList>
            <person name="Xiao Y.-L."/>
            <person name="Smith S.R."/>
            <person name="Ishmael N."/>
            <person name="Redman J.C."/>
            <person name="Kumar N."/>
            <person name="Monaghan E.L."/>
            <person name="Ayele M."/>
            <person name="Haas B.J."/>
            <person name="Wu H.C."/>
            <person name="Town C.D."/>
        </authorList>
    </citation>
    <scope>NUCLEOTIDE SEQUENCE [LARGE SCALE MRNA]</scope>
    <source>
        <strain>cv. Columbia</strain>
    </source>
</reference>
<accession>Q5S502</accession>
<accession>Q5XVJ0</accession>
<accession>Q9C6D4</accession>
<sequence length="108" mass="11689">MVMAKNLTKFYVVFLVVLMMVVSLLLAIEGRPVKDSSRSLTQMRDSSMFNGSVIMSSFKPVESSVKDLSWLATVKQSGPSPGVGHHRAKGYKMFGRANDSGPSPGVGH</sequence>